<accession>P22550</accession>
<keyword id="KW-0067">ATP-binding</keyword>
<keyword id="KW-0375">Hydrogen ion transport</keyword>
<keyword id="KW-0406">Ion transport</keyword>
<keyword id="KW-0472">Membrane</keyword>
<keyword id="KW-0547">Nucleotide-binding</keyword>
<keyword id="KW-0813">Transport</keyword>
<keyword id="KW-0926">Vacuole</keyword>
<protein>
    <recommendedName>
        <fullName evidence="4">V-type proton ATPase subunit B</fullName>
        <shortName>V-ATPase subunit B</shortName>
    </recommendedName>
    <alternativeName>
        <fullName>V-ATPase 57 kDa subunit</fullName>
    </alternativeName>
    <alternativeName>
        <fullName>Vacuolar proton pump subunit B</fullName>
    </alternativeName>
</protein>
<sequence length="511" mass="57200">MSLTDKELFELNKKAVTEGFKIKPRINYTPVGGVNGPLVILDNVKFPRYNEIVNLTLPDGTVRQGQVLEVRGTKAIVQVFEGTSGIDVKKTRVEFTGENLKIPVSEDMLGRIFDGSGRPIDKGPKIFAEDYLDINGSPINPYARIYPEEMISTGVSAIDTMNSIARGQKIPIFSASGLPHNEIAAQICRQAGLVRPTKDVHDGHEENFSIVFAAMGVNLETSRFFKQDFEENGSLERTTLFLNLANDPTIERIITPRLALTTAEFLAYQTERHVLTILTDMSSYADALREVSAAREEVPGRRGYPGYMYTDLSTIYERAGRVEGRNGSITQVPILTMPNDDITHPIPDLTGYITEGQIFIDRQLHNRGIYPPINVLPSLSRLMKSAIGEGMTRKDHGDVSNQLYAKYAIGKDAAAMKAVVGEEALSTEDKLSLEFLEKFEKNFISQGAYENRTIFESLDLAWSLLRIYPKEMLNRISPKILEEFYGRDREQDDDEEEEEDPDKSGDKLIDA</sequence>
<gene>
    <name type="primary">VMA2</name>
</gene>
<name>VATB_CANTR</name>
<organism>
    <name type="scientific">Candida tropicalis</name>
    <name type="common">Yeast</name>
    <dbReference type="NCBI Taxonomy" id="5482"/>
    <lineage>
        <taxon>Eukaryota</taxon>
        <taxon>Fungi</taxon>
        <taxon>Dikarya</taxon>
        <taxon>Ascomycota</taxon>
        <taxon>Saccharomycotina</taxon>
        <taxon>Pichiomycetes</taxon>
        <taxon>Debaryomycetaceae</taxon>
        <taxon>Candida/Lodderomyces clade</taxon>
        <taxon>Candida</taxon>
    </lineage>
</organism>
<comment type="function">
    <text evidence="1">Non-catalytic subunit of the V1 complex of vacuolar(H+)-ATPase (V-ATPase), a multisubunit enzyme composed of a peripheral complex (V1) that hydrolyzes ATP and a membrane integral complex (V0) that translocates protons (By similarity). V-ATPase is responsible for acidifying and maintaining the pH of intracellular compartments (By similarity).</text>
</comment>
<comment type="subunit">
    <text evidence="1">V-ATPase is a heteromultimeric enzyme composed of a peripheral catalytic V1 complex (components A to H) attached to an integral membrane V0 proton pore complex (components: a, c, c', c'', d, e, f and VOA1).</text>
</comment>
<comment type="subcellular location">
    <subcellularLocation>
        <location evidence="1">Vacuole membrane</location>
        <topology evidence="5">Peripheral membrane protein</topology>
        <orientation evidence="5">Cytoplasmic side</orientation>
    </subcellularLocation>
</comment>
<comment type="similarity">
    <text evidence="5">Belongs to the ATPase alpha/beta chains family.</text>
</comment>
<proteinExistence type="inferred from homology"/>
<evidence type="ECO:0000250" key="1">
    <source>
        <dbReference type="UniProtKB" id="P16140"/>
    </source>
</evidence>
<evidence type="ECO:0000250" key="2">
    <source>
        <dbReference type="UniProtKB" id="P21281"/>
    </source>
</evidence>
<evidence type="ECO:0000256" key="3">
    <source>
        <dbReference type="SAM" id="MobiDB-lite"/>
    </source>
</evidence>
<evidence type="ECO:0000303" key="4">
    <source>
    </source>
</evidence>
<evidence type="ECO:0000305" key="5"/>
<dbReference type="EMBL" id="X54875">
    <property type="protein sequence ID" value="CAA38656.1"/>
    <property type="molecule type" value="Genomic_DNA"/>
</dbReference>
<dbReference type="PIR" id="S13080">
    <property type="entry name" value="S13080"/>
</dbReference>
<dbReference type="SMR" id="P22550"/>
<dbReference type="VEuPathDB" id="FungiDB:CTMYA2_038580"/>
<dbReference type="VEuPathDB" id="FungiDB:CTRG_00643"/>
<dbReference type="GO" id="GO:0000221">
    <property type="term" value="C:vacuolar proton-transporting V-type ATPase, V1 domain"/>
    <property type="evidence" value="ECO:0000250"/>
    <property type="project" value="UniProtKB"/>
</dbReference>
<dbReference type="GO" id="GO:0005524">
    <property type="term" value="F:ATP binding"/>
    <property type="evidence" value="ECO:0007669"/>
    <property type="project" value="UniProtKB-KW"/>
</dbReference>
<dbReference type="GO" id="GO:0046961">
    <property type="term" value="F:proton-transporting ATPase activity, rotational mechanism"/>
    <property type="evidence" value="ECO:0007669"/>
    <property type="project" value="InterPro"/>
</dbReference>
<dbReference type="GO" id="GO:0046034">
    <property type="term" value="P:ATP metabolic process"/>
    <property type="evidence" value="ECO:0007669"/>
    <property type="project" value="InterPro"/>
</dbReference>
<dbReference type="GO" id="GO:0007035">
    <property type="term" value="P:vacuolar acidification"/>
    <property type="evidence" value="ECO:0007669"/>
    <property type="project" value="TreeGrafter"/>
</dbReference>
<dbReference type="CDD" id="cd18112">
    <property type="entry name" value="ATP-synt_V_A-type_beta_C"/>
    <property type="match status" value="1"/>
</dbReference>
<dbReference type="CDD" id="cd18118">
    <property type="entry name" value="ATP-synt_V_A-type_beta_N"/>
    <property type="match status" value="1"/>
</dbReference>
<dbReference type="CDD" id="cd01135">
    <property type="entry name" value="V_A-ATPase_B"/>
    <property type="match status" value="1"/>
</dbReference>
<dbReference type="FunFam" id="3.40.50.12240:FF:000001">
    <property type="entry name" value="V-type proton ATPase subunit B, brain"/>
    <property type="match status" value="1"/>
</dbReference>
<dbReference type="Gene3D" id="3.40.50.12240">
    <property type="match status" value="1"/>
</dbReference>
<dbReference type="HAMAP" id="MF_00310">
    <property type="entry name" value="ATP_synth_B_arch"/>
    <property type="match status" value="1"/>
</dbReference>
<dbReference type="InterPro" id="IPR055190">
    <property type="entry name" value="ATP-synt_VA_C"/>
</dbReference>
<dbReference type="InterPro" id="IPR020003">
    <property type="entry name" value="ATPase_a/bsu_AS"/>
</dbReference>
<dbReference type="InterPro" id="IPR004100">
    <property type="entry name" value="ATPase_F1/V1/A1_a/bsu_N"/>
</dbReference>
<dbReference type="InterPro" id="IPR000194">
    <property type="entry name" value="ATPase_F1/V1/A1_a/bsu_nucl-bd"/>
</dbReference>
<dbReference type="InterPro" id="IPR005723">
    <property type="entry name" value="ATPase_V1-cplx_bsu"/>
</dbReference>
<dbReference type="InterPro" id="IPR027417">
    <property type="entry name" value="P-loop_NTPase"/>
</dbReference>
<dbReference type="InterPro" id="IPR022879">
    <property type="entry name" value="V-ATPase_su_B/beta"/>
</dbReference>
<dbReference type="NCBIfam" id="NF003235">
    <property type="entry name" value="PRK04196.1"/>
    <property type="match status" value="1"/>
</dbReference>
<dbReference type="NCBIfam" id="TIGR01040">
    <property type="entry name" value="V-ATPase_V1_B"/>
    <property type="match status" value="1"/>
</dbReference>
<dbReference type="PANTHER" id="PTHR43389">
    <property type="entry name" value="V-TYPE PROTON ATPASE SUBUNIT B"/>
    <property type="match status" value="1"/>
</dbReference>
<dbReference type="PANTHER" id="PTHR43389:SF4">
    <property type="entry name" value="V-TYPE PROTON ATPASE SUBUNIT B"/>
    <property type="match status" value="1"/>
</dbReference>
<dbReference type="Pfam" id="PF00006">
    <property type="entry name" value="ATP-synt_ab"/>
    <property type="match status" value="1"/>
</dbReference>
<dbReference type="Pfam" id="PF02874">
    <property type="entry name" value="ATP-synt_ab_N"/>
    <property type="match status" value="1"/>
</dbReference>
<dbReference type="Pfam" id="PF22919">
    <property type="entry name" value="ATP-synt_VA_C"/>
    <property type="match status" value="1"/>
</dbReference>
<dbReference type="PIRSF" id="PIRSF039114">
    <property type="entry name" value="V-ATPsynth_beta/V-ATPase_B"/>
    <property type="match status" value="1"/>
</dbReference>
<dbReference type="SUPFAM" id="SSF52540">
    <property type="entry name" value="P-loop containing nucleoside triphosphate hydrolases"/>
    <property type="match status" value="1"/>
</dbReference>
<dbReference type="PROSITE" id="PS00152">
    <property type="entry name" value="ATPASE_ALPHA_BETA"/>
    <property type="match status" value="1"/>
</dbReference>
<feature type="chain" id="PRO_0000144645" description="V-type proton ATPase subunit B">
    <location>
        <begin position="1"/>
        <end position="511"/>
    </location>
</feature>
<feature type="region of interest" description="Disordered" evidence="3">
    <location>
        <begin position="484"/>
        <end position="511"/>
    </location>
</feature>
<feature type="compositionally biased region" description="Acidic residues" evidence="3">
    <location>
        <begin position="491"/>
        <end position="501"/>
    </location>
</feature>
<feature type="compositionally biased region" description="Basic and acidic residues" evidence="3">
    <location>
        <begin position="502"/>
        <end position="511"/>
    </location>
</feature>
<feature type="binding site" evidence="2">
    <location>
        <position position="381"/>
    </location>
    <ligand>
        <name>ATP</name>
        <dbReference type="ChEBI" id="CHEBI:30616"/>
    </ligand>
</feature>
<reference key="1">
    <citation type="journal article" date="1990" name="Nucleic Acids Res.">
        <title>Gene and derived peptide sequences for C. tropicalis vacuolar ATPase subunit b.</title>
        <authorList>
            <person name="Gu H.H."/>
            <person name="Gallagher M.J."/>
            <person name="Rupkey S."/>
            <person name="Dean G.E."/>
        </authorList>
    </citation>
    <scope>NUCLEOTIDE SEQUENCE [GENOMIC DNA]</scope>
</reference>